<comment type="function">
    <text evidence="1">Core subunit of the mitochondrial membrane respiratory chain NADH dehydrogenase (Complex I) that is believed to belong to the minimal assembly required for catalysis. Complex I functions in the transfer of electrons from NADH to the respiratory chain. The immediate electron acceptor for the enzyme is believed to be ubiquinone (By similarity).</text>
</comment>
<comment type="catalytic activity">
    <reaction>
        <text>a ubiquinone + NADH + 5 H(+)(in) = a ubiquinol + NAD(+) + 4 H(+)(out)</text>
        <dbReference type="Rhea" id="RHEA:29091"/>
        <dbReference type="Rhea" id="RHEA-COMP:9565"/>
        <dbReference type="Rhea" id="RHEA-COMP:9566"/>
        <dbReference type="ChEBI" id="CHEBI:15378"/>
        <dbReference type="ChEBI" id="CHEBI:16389"/>
        <dbReference type="ChEBI" id="CHEBI:17976"/>
        <dbReference type="ChEBI" id="CHEBI:57540"/>
        <dbReference type="ChEBI" id="CHEBI:57945"/>
        <dbReference type="EC" id="7.1.1.2"/>
    </reaction>
</comment>
<comment type="subcellular location">
    <subcellularLocation>
        <location evidence="3">Mitochondrion membrane</location>
        <topology evidence="3">Multi-pass membrane protein</topology>
    </subcellularLocation>
</comment>
<comment type="similarity">
    <text evidence="3">Belongs to the complex I subunit 6 family.</text>
</comment>
<keyword id="KW-0249">Electron transport</keyword>
<keyword id="KW-0472">Membrane</keyword>
<keyword id="KW-0496">Mitochondrion</keyword>
<keyword id="KW-0520">NAD</keyword>
<keyword id="KW-0679">Respiratory chain</keyword>
<keyword id="KW-1278">Translocase</keyword>
<keyword id="KW-0812">Transmembrane</keyword>
<keyword id="KW-1133">Transmembrane helix</keyword>
<keyword id="KW-0813">Transport</keyword>
<keyword id="KW-0830">Ubiquinone</keyword>
<gene>
    <name type="primary">MT-ND6</name>
    <name type="synonym">MTND6</name>
    <name type="synonym">NADH6</name>
    <name type="synonym">ND6</name>
</gene>
<evidence type="ECO:0000250" key="1"/>
<evidence type="ECO:0000255" key="2"/>
<evidence type="ECO:0000305" key="3"/>
<sequence length="173" mass="18454">MVYFVSMMMIGLILGLMGVASNPSPYYAALGLVTAAGVGCGLLVSYGGSFMSLILFLIYLGGMLVVFAYTAALAAEPYPEAWGDWSVLMYVGIYLTGLVIAGKYFLVGKWGDSWAGVEELSSFEVVRGDFGGVALLYSLGGWMLVLSGWVLLVTLFVVLEVTRGLSWGTLRAV</sequence>
<reference key="1">
    <citation type="journal article" date="1998" name="Genetics">
        <title>The complete nucleotide sequence of the mitochondrial DNA of the dogfish, Scyliorhinus canicula.</title>
        <authorList>
            <person name="Delarbre C."/>
            <person name="Spruyt N."/>
            <person name="Delmarre C."/>
            <person name="Gallut C."/>
            <person name="Barriel V."/>
            <person name="Janvier P."/>
            <person name="Laudet V."/>
            <person name="Gachelin G."/>
        </authorList>
    </citation>
    <scope>NUCLEOTIDE SEQUENCE [GENOMIC DNA]</scope>
    <source>
        <tissue>Muscle</tissue>
    </source>
</reference>
<organism>
    <name type="scientific">Scyliorhinus canicula</name>
    <name type="common">Small-spotted catshark</name>
    <name type="synonym">Squalus canicula</name>
    <dbReference type="NCBI Taxonomy" id="7830"/>
    <lineage>
        <taxon>Eukaryota</taxon>
        <taxon>Metazoa</taxon>
        <taxon>Chordata</taxon>
        <taxon>Craniata</taxon>
        <taxon>Vertebrata</taxon>
        <taxon>Chondrichthyes</taxon>
        <taxon>Elasmobranchii</taxon>
        <taxon>Galeomorphii</taxon>
        <taxon>Galeoidea</taxon>
        <taxon>Carcharhiniformes</taxon>
        <taxon>Scyliorhinidae</taxon>
        <taxon>Scyliorhinus</taxon>
    </lineage>
</organism>
<feature type="chain" id="PRO_0000118332" description="NADH-ubiquinone oxidoreductase chain 6">
    <location>
        <begin position="1"/>
        <end position="173"/>
    </location>
</feature>
<feature type="transmembrane region" description="Helical" evidence="2">
    <location>
        <begin position="1"/>
        <end position="21"/>
    </location>
</feature>
<feature type="transmembrane region" description="Helical" evidence="2">
    <location>
        <begin position="28"/>
        <end position="48"/>
    </location>
</feature>
<feature type="transmembrane region" description="Helical" evidence="2">
    <location>
        <begin position="53"/>
        <end position="73"/>
    </location>
</feature>
<feature type="transmembrane region" description="Helical" evidence="2">
    <location>
        <begin position="87"/>
        <end position="107"/>
    </location>
</feature>
<feature type="transmembrane region" description="Helical" evidence="2">
    <location>
        <begin position="139"/>
        <end position="159"/>
    </location>
</feature>
<protein>
    <recommendedName>
        <fullName>NADH-ubiquinone oxidoreductase chain 6</fullName>
        <ecNumber>7.1.1.2</ecNumber>
    </recommendedName>
    <alternativeName>
        <fullName>NADH dehydrogenase subunit 6</fullName>
    </alternativeName>
</protein>
<geneLocation type="mitochondrion"/>
<dbReference type="EC" id="7.1.1.2"/>
<dbReference type="EMBL" id="Y16067">
    <property type="protein sequence ID" value="CAA76030.1"/>
    <property type="molecule type" value="Genomic_DNA"/>
</dbReference>
<dbReference type="PIR" id="T11311">
    <property type="entry name" value="T11311"/>
</dbReference>
<dbReference type="RefSeq" id="NP_007625.1">
    <property type="nucleotide sequence ID" value="NC_001950.1"/>
</dbReference>
<dbReference type="SMR" id="O79412"/>
<dbReference type="GeneID" id="808302"/>
<dbReference type="CTD" id="4541"/>
<dbReference type="OrthoDB" id="9837654at2759"/>
<dbReference type="GO" id="GO:0031966">
    <property type="term" value="C:mitochondrial membrane"/>
    <property type="evidence" value="ECO:0007669"/>
    <property type="project" value="UniProtKB-SubCell"/>
</dbReference>
<dbReference type="GO" id="GO:0008137">
    <property type="term" value="F:NADH dehydrogenase (ubiquinone) activity"/>
    <property type="evidence" value="ECO:0007669"/>
    <property type="project" value="UniProtKB-EC"/>
</dbReference>
<dbReference type="Gene3D" id="1.20.120.1200">
    <property type="entry name" value="NADH-ubiquinone/plastoquinone oxidoreductase chain 6, subunit NuoJ"/>
    <property type="match status" value="1"/>
</dbReference>
<dbReference type="InterPro" id="IPR050269">
    <property type="entry name" value="ComplexI_Subunit6"/>
</dbReference>
<dbReference type="InterPro" id="IPR001457">
    <property type="entry name" value="NADH_UbQ/plastoQ_OxRdtase_su6"/>
</dbReference>
<dbReference type="InterPro" id="IPR042106">
    <property type="entry name" value="Nuo/plastoQ_OxRdtase_6_NuoJ"/>
</dbReference>
<dbReference type="PANTHER" id="PTHR11435">
    <property type="entry name" value="NADH UBIQUINONE OXIDOREDUCTASE SUBUNIT ND6"/>
    <property type="match status" value="1"/>
</dbReference>
<dbReference type="PANTHER" id="PTHR11435:SF1">
    <property type="entry name" value="NADH-UBIQUINONE OXIDOREDUCTASE CHAIN 6"/>
    <property type="match status" value="1"/>
</dbReference>
<dbReference type="Pfam" id="PF00499">
    <property type="entry name" value="Oxidored_q3"/>
    <property type="match status" value="1"/>
</dbReference>
<accession>O79412</accession>
<proteinExistence type="inferred from homology"/>
<name>NU6M_SCYCA</name>